<gene>
    <name evidence="1" type="primary">argG</name>
    <name type="ordered locus">Avin_14080</name>
</gene>
<dbReference type="EC" id="6.3.4.5" evidence="1"/>
<dbReference type="EMBL" id="CP001157">
    <property type="protein sequence ID" value="ACO77625.1"/>
    <property type="molecule type" value="Genomic_DNA"/>
</dbReference>
<dbReference type="RefSeq" id="WP_012700044.1">
    <property type="nucleotide sequence ID" value="NC_012560.1"/>
</dbReference>
<dbReference type="SMR" id="C1DQV2"/>
<dbReference type="STRING" id="322710.Avin_14080"/>
<dbReference type="EnsemblBacteria" id="ACO77625">
    <property type="protein sequence ID" value="ACO77625"/>
    <property type="gene ID" value="Avin_14080"/>
</dbReference>
<dbReference type="GeneID" id="88184708"/>
<dbReference type="KEGG" id="avn:Avin_14080"/>
<dbReference type="eggNOG" id="COG0137">
    <property type="taxonomic scope" value="Bacteria"/>
</dbReference>
<dbReference type="HOGENOM" id="CLU_032784_4_2_6"/>
<dbReference type="OrthoDB" id="9801641at2"/>
<dbReference type="UniPathway" id="UPA00068">
    <property type="reaction ID" value="UER00113"/>
</dbReference>
<dbReference type="Proteomes" id="UP000002424">
    <property type="component" value="Chromosome"/>
</dbReference>
<dbReference type="GO" id="GO:0005737">
    <property type="term" value="C:cytoplasm"/>
    <property type="evidence" value="ECO:0007669"/>
    <property type="project" value="UniProtKB-SubCell"/>
</dbReference>
<dbReference type="GO" id="GO:0004055">
    <property type="term" value="F:argininosuccinate synthase activity"/>
    <property type="evidence" value="ECO:0007669"/>
    <property type="project" value="UniProtKB-UniRule"/>
</dbReference>
<dbReference type="GO" id="GO:0005524">
    <property type="term" value="F:ATP binding"/>
    <property type="evidence" value="ECO:0007669"/>
    <property type="project" value="UniProtKB-UniRule"/>
</dbReference>
<dbReference type="GO" id="GO:0000053">
    <property type="term" value="P:argininosuccinate metabolic process"/>
    <property type="evidence" value="ECO:0007669"/>
    <property type="project" value="TreeGrafter"/>
</dbReference>
<dbReference type="GO" id="GO:0006526">
    <property type="term" value="P:L-arginine biosynthetic process"/>
    <property type="evidence" value="ECO:0007669"/>
    <property type="project" value="UniProtKB-UniRule"/>
</dbReference>
<dbReference type="GO" id="GO:0000050">
    <property type="term" value="P:urea cycle"/>
    <property type="evidence" value="ECO:0007669"/>
    <property type="project" value="TreeGrafter"/>
</dbReference>
<dbReference type="CDD" id="cd01999">
    <property type="entry name" value="ASS"/>
    <property type="match status" value="1"/>
</dbReference>
<dbReference type="FunFam" id="1.20.5.470:FF:000001">
    <property type="entry name" value="Argininosuccinate synthase"/>
    <property type="match status" value="1"/>
</dbReference>
<dbReference type="FunFam" id="3.40.50.620:FF:000019">
    <property type="entry name" value="Argininosuccinate synthase"/>
    <property type="match status" value="1"/>
</dbReference>
<dbReference type="FunFam" id="3.90.1260.10:FF:000001">
    <property type="entry name" value="Argininosuccinate synthase"/>
    <property type="match status" value="1"/>
</dbReference>
<dbReference type="Gene3D" id="3.90.1260.10">
    <property type="entry name" value="Argininosuccinate synthetase, chain A, domain 2"/>
    <property type="match status" value="1"/>
</dbReference>
<dbReference type="Gene3D" id="3.40.50.620">
    <property type="entry name" value="HUPs"/>
    <property type="match status" value="1"/>
</dbReference>
<dbReference type="Gene3D" id="1.20.5.470">
    <property type="entry name" value="Single helix bin"/>
    <property type="match status" value="1"/>
</dbReference>
<dbReference type="HAMAP" id="MF_00005">
    <property type="entry name" value="Arg_succ_synth_type1"/>
    <property type="match status" value="1"/>
</dbReference>
<dbReference type="InterPro" id="IPR048268">
    <property type="entry name" value="Arginosuc_syn_C"/>
</dbReference>
<dbReference type="InterPro" id="IPR048267">
    <property type="entry name" value="Arginosuc_syn_N"/>
</dbReference>
<dbReference type="InterPro" id="IPR001518">
    <property type="entry name" value="Arginosuc_synth"/>
</dbReference>
<dbReference type="InterPro" id="IPR018223">
    <property type="entry name" value="Arginosuc_synth_CS"/>
</dbReference>
<dbReference type="InterPro" id="IPR023434">
    <property type="entry name" value="Arginosuc_synth_type_1_subfam"/>
</dbReference>
<dbReference type="InterPro" id="IPR024074">
    <property type="entry name" value="AS_cat/multimer_dom_body"/>
</dbReference>
<dbReference type="InterPro" id="IPR014729">
    <property type="entry name" value="Rossmann-like_a/b/a_fold"/>
</dbReference>
<dbReference type="NCBIfam" id="TIGR00032">
    <property type="entry name" value="argG"/>
    <property type="match status" value="1"/>
</dbReference>
<dbReference type="NCBIfam" id="NF001770">
    <property type="entry name" value="PRK00509.1"/>
    <property type="match status" value="1"/>
</dbReference>
<dbReference type="PANTHER" id="PTHR11587">
    <property type="entry name" value="ARGININOSUCCINATE SYNTHASE"/>
    <property type="match status" value="1"/>
</dbReference>
<dbReference type="PANTHER" id="PTHR11587:SF2">
    <property type="entry name" value="ARGININOSUCCINATE SYNTHASE"/>
    <property type="match status" value="1"/>
</dbReference>
<dbReference type="Pfam" id="PF20979">
    <property type="entry name" value="Arginosuc_syn_C"/>
    <property type="match status" value="1"/>
</dbReference>
<dbReference type="Pfam" id="PF00764">
    <property type="entry name" value="Arginosuc_synth"/>
    <property type="match status" value="1"/>
</dbReference>
<dbReference type="SUPFAM" id="SSF52402">
    <property type="entry name" value="Adenine nucleotide alpha hydrolases-like"/>
    <property type="match status" value="1"/>
</dbReference>
<dbReference type="SUPFAM" id="SSF69864">
    <property type="entry name" value="Argininosuccinate synthetase, C-terminal domain"/>
    <property type="match status" value="1"/>
</dbReference>
<dbReference type="PROSITE" id="PS00564">
    <property type="entry name" value="ARGININOSUCCIN_SYN_1"/>
    <property type="match status" value="1"/>
</dbReference>
<dbReference type="PROSITE" id="PS00565">
    <property type="entry name" value="ARGININOSUCCIN_SYN_2"/>
    <property type="match status" value="1"/>
</dbReference>
<sequence>MADVKKVVLAYSGGLDTSVILKWLQDTYNCEVVTFTADLGQGEEVEPARAKAQALGVKEIFIDDLREEFVRDFVFPMFRANTVYEGEYLLGTSIARPLIAKRLIEIANATGADAISHGATGKGNDQVRFELGAYALKPGVKVIAPWREWDLLSREKLMDYAEKHGIPIERHGKKKSPYSMDANLLHISYEGGVLEDTWTEHEEDMWRWTKSPEAAPDVPTYVELTYRGGDIVAIDGVERTPAQVLGELNRMGGENGIGRLDIVENRYVGMKSRGCYETPGGTIMLKARRAIESITLDREVAHLKDELMPRYASLIYNGYWWSPERLMLQQMIDASQTSVNGVVRLKLYKGNVIVVGRKSDDSLFDASIATFEEDGGAYNQADAAGFIKLNALRMRIAASKGRNTLK</sequence>
<name>ASSY_AZOVD</name>
<reference key="1">
    <citation type="journal article" date="2009" name="J. Bacteriol.">
        <title>Genome sequence of Azotobacter vinelandii, an obligate aerobe specialized to support diverse anaerobic metabolic processes.</title>
        <authorList>
            <person name="Setubal J.C."/>
            <person name="Dos Santos P."/>
            <person name="Goldman B.S."/>
            <person name="Ertesvaag H."/>
            <person name="Espin G."/>
            <person name="Rubio L.M."/>
            <person name="Valla S."/>
            <person name="Almeida N.F."/>
            <person name="Balasubramanian D."/>
            <person name="Cromes L."/>
            <person name="Curatti L."/>
            <person name="Du Z."/>
            <person name="Godsy E."/>
            <person name="Goodner B."/>
            <person name="Hellner-Burris K."/>
            <person name="Hernandez J.A."/>
            <person name="Houmiel K."/>
            <person name="Imperial J."/>
            <person name="Kennedy C."/>
            <person name="Larson T.J."/>
            <person name="Latreille P."/>
            <person name="Ligon L.S."/>
            <person name="Lu J."/>
            <person name="Maerk M."/>
            <person name="Miller N.M."/>
            <person name="Norton S."/>
            <person name="O'Carroll I.P."/>
            <person name="Paulsen I."/>
            <person name="Raulfs E.C."/>
            <person name="Roemer R."/>
            <person name="Rosser J."/>
            <person name="Segura D."/>
            <person name="Slater S."/>
            <person name="Stricklin S.L."/>
            <person name="Studholme D.J."/>
            <person name="Sun J."/>
            <person name="Viana C.J."/>
            <person name="Wallin E."/>
            <person name="Wang B."/>
            <person name="Wheeler C."/>
            <person name="Zhu H."/>
            <person name="Dean D.R."/>
            <person name="Dixon R."/>
            <person name="Wood D."/>
        </authorList>
    </citation>
    <scope>NUCLEOTIDE SEQUENCE [LARGE SCALE GENOMIC DNA]</scope>
    <source>
        <strain>DJ / ATCC BAA-1303</strain>
    </source>
</reference>
<accession>C1DQV2</accession>
<keyword id="KW-0028">Amino-acid biosynthesis</keyword>
<keyword id="KW-0055">Arginine biosynthesis</keyword>
<keyword id="KW-0067">ATP-binding</keyword>
<keyword id="KW-0963">Cytoplasm</keyword>
<keyword id="KW-0436">Ligase</keyword>
<keyword id="KW-0547">Nucleotide-binding</keyword>
<evidence type="ECO:0000255" key="1">
    <source>
        <dbReference type="HAMAP-Rule" id="MF_00005"/>
    </source>
</evidence>
<protein>
    <recommendedName>
        <fullName evidence="1">Argininosuccinate synthase</fullName>
        <ecNumber evidence="1">6.3.4.5</ecNumber>
    </recommendedName>
    <alternativeName>
        <fullName evidence="1">Citrulline--aspartate ligase</fullName>
    </alternativeName>
</protein>
<feature type="chain" id="PRO_1000201675" description="Argininosuccinate synthase">
    <location>
        <begin position="1"/>
        <end position="406"/>
    </location>
</feature>
<feature type="binding site" evidence="1">
    <location>
        <begin position="10"/>
        <end position="18"/>
    </location>
    <ligand>
        <name>ATP</name>
        <dbReference type="ChEBI" id="CHEBI:30616"/>
    </ligand>
</feature>
<feature type="binding site" evidence="1">
    <location>
        <position position="37"/>
    </location>
    <ligand>
        <name>ATP</name>
        <dbReference type="ChEBI" id="CHEBI:30616"/>
    </ligand>
</feature>
<feature type="binding site" evidence="1">
    <location>
        <position position="88"/>
    </location>
    <ligand>
        <name>L-citrulline</name>
        <dbReference type="ChEBI" id="CHEBI:57743"/>
    </ligand>
</feature>
<feature type="binding site" evidence="1">
    <location>
        <position position="93"/>
    </location>
    <ligand>
        <name>L-citrulline</name>
        <dbReference type="ChEBI" id="CHEBI:57743"/>
    </ligand>
</feature>
<feature type="binding site" evidence="1">
    <location>
        <position position="118"/>
    </location>
    <ligand>
        <name>ATP</name>
        <dbReference type="ChEBI" id="CHEBI:30616"/>
    </ligand>
</feature>
<feature type="binding site" evidence="1">
    <location>
        <position position="120"/>
    </location>
    <ligand>
        <name>L-aspartate</name>
        <dbReference type="ChEBI" id="CHEBI:29991"/>
    </ligand>
</feature>
<feature type="binding site" evidence="1">
    <location>
        <position position="124"/>
    </location>
    <ligand>
        <name>L-aspartate</name>
        <dbReference type="ChEBI" id="CHEBI:29991"/>
    </ligand>
</feature>
<feature type="binding site" evidence="1">
    <location>
        <position position="124"/>
    </location>
    <ligand>
        <name>L-citrulline</name>
        <dbReference type="ChEBI" id="CHEBI:57743"/>
    </ligand>
</feature>
<feature type="binding site" evidence="1">
    <location>
        <position position="125"/>
    </location>
    <ligand>
        <name>L-aspartate</name>
        <dbReference type="ChEBI" id="CHEBI:29991"/>
    </ligand>
</feature>
<feature type="binding site" evidence="1">
    <location>
        <position position="128"/>
    </location>
    <ligand>
        <name>L-citrulline</name>
        <dbReference type="ChEBI" id="CHEBI:57743"/>
    </ligand>
</feature>
<feature type="binding site" evidence="1">
    <location>
        <position position="179"/>
    </location>
    <ligand>
        <name>L-citrulline</name>
        <dbReference type="ChEBI" id="CHEBI:57743"/>
    </ligand>
</feature>
<feature type="binding site" evidence="1">
    <location>
        <position position="188"/>
    </location>
    <ligand>
        <name>L-citrulline</name>
        <dbReference type="ChEBI" id="CHEBI:57743"/>
    </ligand>
</feature>
<feature type="binding site" evidence="1">
    <location>
        <position position="264"/>
    </location>
    <ligand>
        <name>L-citrulline</name>
        <dbReference type="ChEBI" id="CHEBI:57743"/>
    </ligand>
</feature>
<feature type="binding site" evidence="1">
    <location>
        <position position="276"/>
    </location>
    <ligand>
        <name>L-citrulline</name>
        <dbReference type="ChEBI" id="CHEBI:57743"/>
    </ligand>
</feature>
<comment type="catalytic activity">
    <reaction evidence="1">
        <text>L-citrulline + L-aspartate + ATP = 2-(N(omega)-L-arginino)succinate + AMP + diphosphate + H(+)</text>
        <dbReference type="Rhea" id="RHEA:10932"/>
        <dbReference type="ChEBI" id="CHEBI:15378"/>
        <dbReference type="ChEBI" id="CHEBI:29991"/>
        <dbReference type="ChEBI" id="CHEBI:30616"/>
        <dbReference type="ChEBI" id="CHEBI:33019"/>
        <dbReference type="ChEBI" id="CHEBI:57472"/>
        <dbReference type="ChEBI" id="CHEBI:57743"/>
        <dbReference type="ChEBI" id="CHEBI:456215"/>
        <dbReference type="EC" id="6.3.4.5"/>
    </reaction>
</comment>
<comment type="pathway">
    <text evidence="1">Amino-acid biosynthesis; L-arginine biosynthesis; L-arginine from L-ornithine and carbamoyl phosphate: step 2/3.</text>
</comment>
<comment type="subunit">
    <text evidence="1">Homotetramer.</text>
</comment>
<comment type="subcellular location">
    <subcellularLocation>
        <location evidence="1">Cytoplasm</location>
    </subcellularLocation>
</comment>
<comment type="similarity">
    <text evidence="1">Belongs to the argininosuccinate synthase family. Type 1 subfamily.</text>
</comment>
<proteinExistence type="inferred from homology"/>
<organism>
    <name type="scientific">Azotobacter vinelandii (strain DJ / ATCC BAA-1303)</name>
    <dbReference type="NCBI Taxonomy" id="322710"/>
    <lineage>
        <taxon>Bacteria</taxon>
        <taxon>Pseudomonadati</taxon>
        <taxon>Pseudomonadota</taxon>
        <taxon>Gammaproteobacteria</taxon>
        <taxon>Pseudomonadales</taxon>
        <taxon>Pseudomonadaceae</taxon>
        <taxon>Azotobacter</taxon>
    </lineage>
</organism>